<organism>
    <name type="scientific">Helicobacter pylori (strain Shi470)</name>
    <dbReference type="NCBI Taxonomy" id="512562"/>
    <lineage>
        <taxon>Bacteria</taxon>
        <taxon>Pseudomonadati</taxon>
        <taxon>Campylobacterota</taxon>
        <taxon>Epsilonproteobacteria</taxon>
        <taxon>Campylobacterales</taxon>
        <taxon>Helicobacteraceae</taxon>
        <taxon>Helicobacter</taxon>
    </lineage>
</organism>
<name>ACCA_HELPS</name>
<keyword id="KW-0067">ATP-binding</keyword>
<keyword id="KW-0963">Cytoplasm</keyword>
<keyword id="KW-0275">Fatty acid biosynthesis</keyword>
<keyword id="KW-0276">Fatty acid metabolism</keyword>
<keyword id="KW-0444">Lipid biosynthesis</keyword>
<keyword id="KW-0443">Lipid metabolism</keyword>
<keyword id="KW-0547">Nucleotide-binding</keyword>
<keyword id="KW-0808">Transferase</keyword>
<protein>
    <recommendedName>
        <fullName evidence="1">Acetyl-coenzyme A carboxylase carboxyl transferase subunit alpha</fullName>
        <shortName evidence="1">ACCase subunit alpha</shortName>
        <shortName evidence="1">Acetyl-CoA carboxylase carboxyltransferase subunit alpha</shortName>
        <ecNumber evidence="1">2.1.3.15</ecNumber>
    </recommendedName>
</protein>
<gene>
    <name evidence="1" type="primary">accA</name>
    <name type="ordered locus">HPSH_04090</name>
</gene>
<feature type="chain" id="PRO_1000134497" description="Acetyl-coenzyme A carboxylase carboxyl transferase subunit alpha">
    <location>
        <begin position="1"/>
        <end position="312"/>
    </location>
</feature>
<feature type="domain" description="CoA carboxyltransferase C-terminal" evidence="2">
    <location>
        <begin position="36"/>
        <end position="286"/>
    </location>
</feature>
<accession>B2UTS1</accession>
<proteinExistence type="inferred from homology"/>
<dbReference type="EC" id="2.1.3.15" evidence="1"/>
<dbReference type="EMBL" id="CP001072">
    <property type="protein sequence ID" value="ACD48253.1"/>
    <property type="molecule type" value="Genomic_DNA"/>
</dbReference>
<dbReference type="RefSeq" id="WP_001029386.1">
    <property type="nucleotide sequence ID" value="NC_010698.2"/>
</dbReference>
<dbReference type="SMR" id="B2UTS1"/>
<dbReference type="KEGG" id="hps:HPSH_04090"/>
<dbReference type="HOGENOM" id="CLU_015486_0_2_7"/>
<dbReference type="UniPathway" id="UPA00655">
    <property type="reaction ID" value="UER00711"/>
</dbReference>
<dbReference type="GO" id="GO:0009317">
    <property type="term" value="C:acetyl-CoA carboxylase complex"/>
    <property type="evidence" value="ECO:0007669"/>
    <property type="project" value="InterPro"/>
</dbReference>
<dbReference type="GO" id="GO:0003989">
    <property type="term" value="F:acetyl-CoA carboxylase activity"/>
    <property type="evidence" value="ECO:0007669"/>
    <property type="project" value="InterPro"/>
</dbReference>
<dbReference type="GO" id="GO:0005524">
    <property type="term" value="F:ATP binding"/>
    <property type="evidence" value="ECO:0007669"/>
    <property type="project" value="UniProtKB-KW"/>
</dbReference>
<dbReference type="GO" id="GO:0016743">
    <property type="term" value="F:carboxyl- or carbamoyltransferase activity"/>
    <property type="evidence" value="ECO:0007669"/>
    <property type="project" value="UniProtKB-UniRule"/>
</dbReference>
<dbReference type="GO" id="GO:0006633">
    <property type="term" value="P:fatty acid biosynthetic process"/>
    <property type="evidence" value="ECO:0007669"/>
    <property type="project" value="UniProtKB-KW"/>
</dbReference>
<dbReference type="GO" id="GO:2001295">
    <property type="term" value="P:malonyl-CoA biosynthetic process"/>
    <property type="evidence" value="ECO:0007669"/>
    <property type="project" value="UniProtKB-UniRule"/>
</dbReference>
<dbReference type="Gene3D" id="3.90.226.10">
    <property type="entry name" value="2-enoyl-CoA Hydratase, Chain A, domain 1"/>
    <property type="match status" value="1"/>
</dbReference>
<dbReference type="HAMAP" id="MF_00823">
    <property type="entry name" value="AcetylCoA_CT_alpha"/>
    <property type="match status" value="1"/>
</dbReference>
<dbReference type="InterPro" id="IPR001095">
    <property type="entry name" value="Acetyl_CoA_COase_a_su"/>
</dbReference>
<dbReference type="InterPro" id="IPR029045">
    <property type="entry name" value="ClpP/crotonase-like_dom_sf"/>
</dbReference>
<dbReference type="InterPro" id="IPR011763">
    <property type="entry name" value="COA_CT_C"/>
</dbReference>
<dbReference type="NCBIfam" id="TIGR00513">
    <property type="entry name" value="accA"/>
    <property type="match status" value="1"/>
</dbReference>
<dbReference type="NCBIfam" id="NF041504">
    <property type="entry name" value="AccA_sub"/>
    <property type="match status" value="1"/>
</dbReference>
<dbReference type="NCBIfam" id="NF004344">
    <property type="entry name" value="PRK05724.1"/>
    <property type="match status" value="1"/>
</dbReference>
<dbReference type="PANTHER" id="PTHR42853">
    <property type="entry name" value="ACETYL-COENZYME A CARBOXYLASE CARBOXYL TRANSFERASE SUBUNIT ALPHA"/>
    <property type="match status" value="1"/>
</dbReference>
<dbReference type="PANTHER" id="PTHR42853:SF3">
    <property type="entry name" value="ACETYL-COENZYME A CARBOXYLASE CARBOXYL TRANSFERASE SUBUNIT ALPHA, CHLOROPLASTIC"/>
    <property type="match status" value="1"/>
</dbReference>
<dbReference type="Pfam" id="PF03255">
    <property type="entry name" value="ACCA"/>
    <property type="match status" value="1"/>
</dbReference>
<dbReference type="PRINTS" id="PR01069">
    <property type="entry name" value="ACCCTRFRASEA"/>
</dbReference>
<dbReference type="SUPFAM" id="SSF52096">
    <property type="entry name" value="ClpP/crotonase"/>
    <property type="match status" value="1"/>
</dbReference>
<dbReference type="PROSITE" id="PS50989">
    <property type="entry name" value="COA_CT_CTER"/>
    <property type="match status" value="1"/>
</dbReference>
<sequence>MAIYLDFENHIKEIQNEIELALIRGDEDAKEILEKRLDKEVKSIYSNLTDFQKLQLARHPDRPYAMDYIDLILKDKYEVFGDRHYNDDKAIVCFIGKIDNVPVVVIGEEKGRGTKNKLLRNFGMPNPCGYRKALKMAKFAEKFNLPILMLVDTAGAYPGIGAEERGQSEAIAKNLQEFASLKVPTISVIIGEGGSGGALAIAVADKLAMMEYSIFSVISPEGCAAILWDDPSKTEVAIKAMKITPRDLKEAGLIDDIILEPSKGAHRDKFSAANTIKEYFLDALRTIQQDPHFLDNRYQKLMSLGSFVESMN</sequence>
<comment type="function">
    <text evidence="1">Component of the acetyl coenzyme A carboxylase (ACC) complex. First, biotin carboxylase catalyzes the carboxylation of biotin on its carrier protein (BCCP) and then the CO(2) group is transferred by the carboxyltransferase to acetyl-CoA to form malonyl-CoA.</text>
</comment>
<comment type="catalytic activity">
    <reaction evidence="1">
        <text>N(6)-carboxybiotinyl-L-lysyl-[protein] + acetyl-CoA = N(6)-biotinyl-L-lysyl-[protein] + malonyl-CoA</text>
        <dbReference type="Rhea" id="RHEA:54728"/>
        <dbReference type="Rhea" id="RHEA-COMP:10505"/>
        <dbReference type="Rhea" id="RHEA-COMP:10506"/>
        <dbReference type="ChEBI" id="CHEBI:57288"/>
        <dbReference type="ChEBI" id="CHEBI:57384"/>
        <dbReference type="ChEBI" id="CHEBI:83144"/>
        <dbReference type="ChEBI" id="CHEBI:83145"/>
        <dbReference type="EC" id="2.1.3.15"/>
    </reaction>
</comment>
<comment type="pathway">
    <text evidence="1">Lipid metabolism; malonyl-CoA biosynthesis; malonyl-CoA from acetyl-CoA: step 1/1.</text>
</comment>
<comment type="subunit">
    <text evidence="1">Acetyl-CoA carboxylase is a heterohexamer composed of biotin carboxyl carrier protein (AccB), biotin carboxylase (AccC) and two subunits each of ACCase subunit alpha (AccA) and ACCase subunit beta (AccD).</text>
</comment>
<comment type="subcellular location">
    <subcellularLocation>
        <location evidence="1">Cytoplasm</location>
    </subcellularLocation>
</comment>
<comment type="similarity">
    <text evidence="1">Belongs to the AccA family.</text>
</comment>
<evidence type="ECO:0000255" key="1">
    <source>
        <dbReference type="HAMAP-Rule" id="MF_00823"/>
    </source>
</evidence>
<evidence type="ECO:0000255" key="2">
    <source>
        <dbReference type="PROSITE-ProRule" id="PRU01137"/>
    </source>
</evidence>
<reference key="1">
    <citation type="submission" date="2008-05" db="EMBL/GenBank/DDBJ databases">
        <title>Genome sequence of Helicobacter pylori from the remote Amazon: traces of Asian ancestry of the first Americans.</title>
        <authorList>
            <person name="Kersulyte D."/>
            <person name="Kalia A."/>
            <person name="Gilman R.H."/>
            <person name="Berg D.E."/>
        </authorList>
    </citation>
    <scope>NUCLEOTIDE SEQUENCE [LARGE SCALE GENOMIC DNA]</scope>
    <source>
        <strain>Shi470</strain>
    </source>
</reference>